<protein>
    <recommendedName>
        <fullName evidence="1">Co-chaperone protein HscB homolog</fullName>
    </recommendedName>
</protein>
<feature type="chain" id="PRO_1000083003" description="Co-chaperone protein HscB homolog">
    <location>
        <begin position="1"/>
        <end position="175"/>
    </location>
</feature>
<feature type="domain" description="J" evidence="1">
    <location>
        <begin position="7"/>
        <end position="79"/>
    </location>
</feature>
<evidence type="ECO:0000255" key="1">
    <source>
        <dbReference type="HAMAP-Rule" id="MF_00682"/>
    </source>
</evidence>
<keyword id="KW-0143">Chaperone</keyword>
<keyword id="KW-1185">Reference proteome</keyword>
<accession>Q13WZ0</accession>
<organism>
    <name type="scientific">Paraburkholderia xenovorans (strain LB400)</name>
    <dbReference type="NCBI Taxonomy" id="266265"/>
    <lineage>
        <taxon>Bacteria</taxon>
        <taxon>Pseudomonadati</taxon>
        <taxon>Pseudomonadota</taxon>
        <taxon>Betaproteobacteria</taxon>
        <taxon>Burkholderiales</taxon>
        <taxon>Burkholderiaceae</taxon>
        <taxon>Paraburkholderia</taxon>
    </lineage>
</organism>
<sequence length="175" mass="19607">MASLNDSHFDLFDLPAQFALDASALDHAYRTVQAQVHPDRFAAAGDAQKRIAMQWATRTNEAYQTLRDPLKRATYLLHLRGIDVGAENNTAMEPAFLMQQMEWRESIEDAAAAKNVDALDALLTELRDEERMRFDKLGALLDSGANQAAGEAVRQLMFIERVASEIGTQIERLEN</sequence>
<name>HSCB_PARXL</name>
<gene>
    <name evidence="1" type="primary">hscB</name>
    <name type="ordered locus">Bxeno_A2861</name>
    <name type="ORF">Bxe_A1556</name>
</gene>
<comment type="function">
    <text evidence="1">Co-chaperone involved in the maturation of iron-sulfur cluster-containing proteins. Seems to help targeting proteins to be folded toward HscA.</text>
</comment>
<comment type="subunit">
    <text evidence="1">Interacts with HscA and stimulates its ATPase activity.</text>
</comment>
<comment type="similarity">
    <text evidence="1">Belongs to the HscB family.</text>
</comment>
<proteinExistence type="inferred from homology"/>
<dbReference type="EMBL" id="CP000270">
    <property type="protein sequence ID" value="ABE31399.1"/>
    <property type="molecule type" value="Genomic_DNA"/>
</dbReference>
<dbReference type="RefSeq" id="WP_011488977.1">
    <property type="nucleotide sequence ID" value="NZ_CP008760.1"/>
</dbReference>
<dbReference type="SMR" id="Q13WZ0"/>
<dbReference type="STRING" id="266265.Bxe_A1556"/>
<dbReference type="KEGG" id="bxb:DR64_3717"/>
<dbReference type="KEGG" id="bxe:Bxe_A1556"/>
<dbReference type="PATRIC" id="fig|266265.5.peg.3003"/>
<dbReference type="eggNOG" id="COG1076">
    <property type="taxonomic scope" value="Bacteria"/>
</dbReference>
<dbReference type="OrthoDB" id="287587at2"/>
<dbReference type="Proteomes" id="UP000001817">
    <property type="component" value="Chromosome 1"/>
</dbReference>
<dbReference type="GO" id="GO:1990230">
    <property type="term" value="C:iron-sulfur cluster transfer complex"/>
    <property type="evidence" value="ECO:0007669"/>
    <property type="project" value="TreeGrafter"/>
</dbReference>
<dbReference type="GO" id="GO:0001671">
    <property type="term" value="F:ATPase activator activity"/>
    <property type="evidence" value="ECO:0007669"/>
    <property type="project" value="InterPro"/>
</dbReference>
<dbReference type="GO" id="GO:0051087">
    <property type="term" value="F:protein-folding chaperone binding"/>
    <property type="evidence" value="ECO:0007669"/>
    <property type="project" value="InterPro"/>
</dbReference>
<dbReference type="GO" id="GO:0044571">
    <property type="term" value="P:[2Fe-2S] cluster assembly"/>
    <property type="evidence" value="ECO:0007669"/>
    <property type="project" value="InterPro"/>
</dbReference>
<dbReference type="GO" id="GO:0051259">
    <property type="term" value="P:protein complex oligomerization"/>
    <property type="evidence" value="ECO:0007669"/>
    <property type="project" value="InterPro"/>
</dbReference>
<dbReference type="GO" id="GO:0006457">
    <property type="term" value="P:protein folding"/>
    <property type="evidence" value="ECO:0007669"/>
    <property type="project" value="UniProtKB-UniRule"/>
</dbReference>
<dbReference type="CDD" id="cd06257">
    <property type="entry name" value="DnaJ"/>
    <property type="match status" value="1"/>
</dbReference>
<dbReference type="Gene3D" id="1.10.287.110">
    <property type="entry name" value="DnaJ domain"/>
    <property type="match status" value="1"/>
</dbReference>
<dbReference type="Gene3D" id="1.20.1280.20">
    <property type="entry name" value="HscB, C-terminal domain"/>
    <property type="match status" value="1"/>
</dbReference>
<dbReference type="HAMAP" id="MF_00682">
    <property type="entry name" value="HscB"/>
    <property type="match status" value="1"/>
</dbReference>
<dbReference type="InterPro" id="IPR001623">
    <property type="entry name" value="DnaJ_domain"/>
</dbReference>
<dbReference type="InterPro" id="IPR004640">
    <property type="entry name" value="HscB"/>
</dbReference>
<dbReference type="InterPro" id="IPR036386">
    <property type="entry name" value="HscB_C_sf"/>
</dbReference>
<dbReference type="InterPro" id="IPR009073">
    <property type="entry name" value="HscB_oligo_C"/>
</dbReference>
<dbReference type="InterPro" id="IPR036869">
    <property type="entry name" value="J_dom_sf"/>
</dbReference>
<dbReference type="NCBIfam" id="TIGR00714">
    <property type="entry name" value="hscB"/>
    <property type="match status" value="1"/>
</dbReference>
<dbReference type="NCBIfam" id="NF002935">
    <property type="entry name" value="PRK03578.1"/>
    <property type="match status" value="1"/>
</dbReference>
<dbReference type="PANTHER" id="PTHR14021">
    <property type="entry name" value="IRON-SULFUR CLUSTER CO-CHAPERONE PROTEIN HSCB"/>
    <property type="match status" value="1"/>
</dbReference>
<dbReference type="PANTHER" id="PTHR14021:SF15">
    <property type="entry name" value="IRON-SULFUR CLUSTER CO-CHAPERONE PROTEIN HSCB"/>
    <property type="match status" value="1"/>
</dbReference>
<dbReference type="Pfam" id="PF07743">
    <property type="entry name" value="HSCB_C"/>
    <property type="match status" value="1"/>
</dbReference>
<dbReference type="SMART" id="SM00271">
    <property type="entry name" value="DnaJ"/>
    <property type="match status" value="1"/>
</dbReference>
<dbReference type="SUPFAM" id="SSF46565">
    <property type="entry name" value="Chaperone J-domain"/>
    <property type="match status" value="1"/>
</dbReference>
<dbReference type="SUPFAM" id="SSF47144">
    <property type="entry name" value="HSC20 (HSCB), C-terminal oligomerisation domain"/>
    <property type="match status" value="1"/>
</dbReference>
<dbReference type="PROSITE" id="PS50076">
    <property type="entry name" value="DNAJ_2"/>
    <property type="match status" value="1"/>
</dbReference>
<reference key="1">
    <citation type="journal article" date="2006" name="Proc. Natl. Acad. Sci. U.S.A.">
        <title>Burkholderia xenovorans LB400 harbors a multi-replicon, 9.73-Mbp genome shaped for versatility.</title>
        <authorList>
            <person name="Chain P.S.G."/>
            <person name="Denef V.J."/>
            <person name="Konstantinidis K.T."/>
            <person name="Vergez L.M."/>
            <person name="Agullo L."/>
            <person name="Reyes V.L."/>
            <person name="Hauser L."/>
            <person name="Cordova M."/>
            <person name="Gomez L."/>
            <person name="Gonzalez M."/>
            <person name="Land M."/>
            <person name="Lao V."/>
            <person name="Larimer F."/>
            <person name="LiPuma J.J."/>
            <person name="Mahenthiralingam E."/>
            <person name="Malfatti S.A."/>
            <person name="Marx C.J."/>
            <person name="Parnell J.J."/>
            <person name="Ramette A."/>
            <person name="Richardson P."/>
            <person name="Seeger M."/>
            <person name="Smith D."/>
            <person name="Spilker T."/>
            <person name="Sul W.J."/>
            <person name="Tsoi T.V."/>
            <person name="Ulrich L.E."/>
            <person name="Zhulin I.B."/>
            <person name="Tiedje J.M."/>
        </authorList>
    </citation>
    <scope>NUCLEOTIDE SEQUENCE [LARGE SCALE GENOMIC DNA]</scope>
    <source>
        <strain>LB400</strain>
    </source>
</reference>